<evidence type="ECO:0000255" key="1">
    <source>
        <dbReference type="HAMAP-Rule" id="MF_00530"/>
    </source>
</evidence>
<evidence type="ECO:0000269" key="2">
    <source>
    </source>
</evidence>
<evidence type="ECO:0000303" key="3">
    <source>
    </source>
</evidence>
<evidence type="ECO:0000303" key="4">
    <source ref="1"/>
</evidence>
<evidence type="ECO:0000305" key="5"/>
<comment type="function">
    <text evidence="2">F(1)F(0) ATP synthase produces ATP from ADP in the presence of a proton or sodium gradient. F-type ATPases consist of two structural domains, F(1) containing the extramembraneous catalytic core and F(0) containing the membrane proton channel, linked together by a central stalk and a peripheral stalk. During catalysis, ATP synthesis in the catalytic domain of F(1) is coupled via a rotary mechanism of the central stalk subunits to proton translocation.</text>
</comment>
<comment type="subunit">
    <text evidence="2">F-type ATPases have 2 components, F(1) - the catalytic core - and F(0) - the membrane proton channel. F(1) has five subunits: alpha(3), beta(3), gamma(1), delta(1), epsilon(1). F(0) has four main subunits: a(1), b(1), b'(1) and c(10-14). The alpha and beta chains form an alternating ring which encloses part of the gamma chain. F(1) is attached to F(0) by a central stalk formed by the gamma and epsilon chains, while a peripheral stalk is formed by the delta, b and b' chains.</text>
</comment>
<comment type="subcellular location">
    <subcellularLocation>
        <location evidence="1 2">Plastid</location>
        <location evidence="1 2">Chloroplast thylakoid membrane</location>
        <topology evidence="1">Peripheral membrane protein</topology>
    </subcellularLocation>
</comment>
<comment type="miscellaneous">
    <text evidence="5">In plastids the F-type ATPase is also known as CF(1)CF(0).</text>
</comment>
<comment type="similarity">
    <text evidence="1">Belongs to the ATPase epsilon chain family.</text>
</comment>
<gene>
    <name evidence="1 4" type="primary">atpE</name>
</gene>
<reference key="1">
    <citation type="journal article" date="1987" name="Plant Mol. Biol.">
        <title>Chloroplast genes encoding subunits of the H(+)-ATPase complex of Chlamydomonas reinhardtii are rearranged compared to higher plants: sequence of the atpE gene and location of the atpF and atpI genes.</title>
        <authorList>
            <person name="Woessner J.P."/>
            <person name="Gillham N.W."/>
            <person name="Boynton J.E."/>
        </authorList>
    </citation>
    <scope>NUCLEOTIDE SEQUENCE [GENOMIC DNA]</scope>
</reference>
<reference key="2">
    <citation type="journal article" date="1990" name="Mol. Gen. Genet.">
        <title>Cotranscription of the wild-type chloroplast atpE gene encoding the CF1/CF0 epsilon subunit with the 3' half of the rps7 gene in Chlamydomonas reinhardtii and characterization of frameshift mutations in atpE.</title>
        <authorList>
            <person name="Robertson D."/>
            <person name="Boynton J.E."/>
            <person name="Gillham N.W."/>
        </authorList>
    </citation>
    <scope>NUCLEOTIDE SEQUENCE [GENOMIC DNA]</scope>
</reference>
<reference key="3">
    <citation type="journal article" date="2009" name="BMC Evol. Biol.">
        <title>Nucleotide diversity of the Chlamydomonas reinhardtii plastid genome: addressing the mutational-hazard hypothesis.</title>
        <authorList>
            <person name="Smith D.R."/>
            <person name="Lee R.W."/>
        </authorList>
    </citation>
    <scope>NUCLEOTIDE SEQUENCE [LARGE SCALE GENOMIC DNA]</scope>
    <source>
        <strain>CC-503</strain>
    </source>
</reference>
<reference key="4">
    <citation type="journal article" date="1995" name="FEBS Lett.">
        <title>Isolation of CF0CF1 from Chlamydomonas reinhardtii cw15 and the N-terminal amino acid sequences of the CF0CF1 subunits.</title>
        <authorList>
            <person name="Fiedler H.R."/>
            <person name="Schmid R."/>
            <person name="Leu S."/>
            <person name="Shavit N."/>
            <person name="Strotmann H."/>
        </authorList>
    </citation>
    <scope>PROTEIN SEQUENCE OF 2-26</scope>
    <scope>FUNCTION</scope>
    <scope>SUBUNIT</scope>
    <scope>SUBCELLULAR LOCATION</scope>
    <source>
        <strain>cw15</strain>
    </source>
</reference>
<reference key="5">
    <citation type="journal article" date="2002" name="Plant Cell">
        <title>The Chlamydomonas reinhardtii plastid chromosome: islands of genes in a sea of repeats.</title>
        <authorList>
            <person name="Maul J.E."/>
            <person name="Lilly J.W."/>
            <person name="Cui L."/>
            <person name="dePamphilis C.W."/>
            <person name="Miller W."/>
            <person name="Harris E.H."/>
            <person name="Stern D.B."/>
        </authorList>
    </citation>
    <scope>IDENTIFICATION</scope>
    <scope>COMPLETE PLASTID GENOME</scope>
</reference>
<keyword id="KW-0066">ATP synthesis</keyword>
<keyword id="KW-0139">CF(1)</keyword>
<keyword id="KW-0150">Chloroplast</keyword>
<keyword id="KW-0903">Direct protein sequencing</keyword>
<keyword id="KW-0375">Hydrogen ion transport</keyword>
<keyword id="KW-0406">Ion transport</keyword>
<keyword id="KW-0472">Membrane</keyword>
<keyword id="KW-0934">Plastid</keyword>
<keyword id="KW-1185">Reference proteome</keyword>
<keyword id="KW-0793">Thylakoid</keyword>
<keyword id="KW-0813">Transport</keyword>
<organism>
    <name type="scientific">Chlamydomonas reinhardtii</name>
    <name type="common">Chlamydomonas smithii</name>
    <dbReference type="NCBI Taxonomy" id="3055"/>
    <lineage>
        <taxon>Eukaryota</taxon>
        <taxon>Viridiplantae</taxon>
        <taxon>Chlorophyta</taxon>
        <taxon>core chlorophytes</taxon>
        <taxon>Chlorophyceae</taxon>
        <taxon>CS clade</taxon>
        <taxon>Chlamydomonadales</taxon>
        <taxon>Chlamydomonadaceae</taxon>
        <taxon>Chlamydomonas</taxon>
    </lineage>
</organism>
<protein>
    <recommendedName>
        <fullName evidence="1 3">ATP synthase epsilon chain, chloroplastic</fullName>
    </recommendedName>
    <alternativeName>
        <fullName evidence="1">ATP synthase F1 sector epsilon subunit</fullName>
    </alternativeName>
    <alternativeName>
        <fullName evidence="1">F-ATPase epsilon subunit</fullName>
    </alternativeName>
</protein>
<proteinExistence type="evidence at protein level"/>
<dbReference type="EMBL" id="M17168">
    <property type="protein sequence ID" value="AAA84147.1"/>
    <property type="molecule type" value="Genomic_DNA"/>
</dbReference>
<dbReference type="EMBL" id="X53977">
    <property type="protein sequence ID" value="CAA37928.1"/>
    <property type="molecule type" value="Genomic_DNA"/>
</dbReference>
<dbReference type="EMBL" id="FJ423446">
    <property type="protein sequence ID" value="ACJ50112.1"/>
    <property type="molecule type" value="Genomic_DNA"/>
</dbReference>
<dbReference type="EMBL" id="FJ436948">
    <property type="protein sequence ID" value="ACK37280.1"/>
    <property type="molecule type" value="Genomic_DNA"/>
</dbReference>
<dbReference type="EMBL" id="FJ436949">
    <property type="protein sequence ID" value="ACK37281.1"/>
    <property type="molecule type" value="Genomic_DNA"/>
</dbReference>
<dbReference type="EMBL" id="BK000554">
    <property type="protein sequence ID" value="DAA00924.1"/>
    <property type="molecule type" value="Genomic_DNA"/>
</dbReference>
<dbReference type="PIR" id="S11898">
    <property type="entry name" value="PWKME"/>
</dbReference>
<dbReference type="RefSeq" id="NP_958379.1">
    <property type="nucleotide sequence ID" value="NC_005353.1"/>
</dbReference>
<dbReference type="SMR" id="P07891"/>
<dbReference type="FunCoup" id="P07891">
    <property type="interactions" value="230"/>
</dbReference>
<dbReference type="STRING" id="3055.P07891"/>
<dbReference type="PaxDb" id="3055-DAA00924"/>
<dbReference type="ProMEX" id="P07891"/>
<dbReference type="GeneID" id="2716972"/>
<dbReference type="KEGG" id="cre:ChreCp023"/>
<dbReference type="eggNOG" id="KOG1758">
    <property type="taxonomic scope" value="Eukaryota"/>
</dbReference>
<dbReference type="HOGENOM" id="CLU_084338_1_2_1"/>
<dbReference type="InParanoid" id="P07891"/>
<dbReference type="BioCyc" id="CHLAMY:CHRECP023-MONOMER"/>
<dbReference type="Proteomes" id="UP000006906">
    <property type="component" value="Chloroplast"/>
</dbReference>
<dbReference type="GO" id="GO:0009535">
    <property type="term" value="C:chloroplast thylakoid membrane"/>
    <property type="evidence" value="ECO:0007669"/>
    <property type="project" value="UniProtKB-SubCell"/>
</dbReference>
<dbReference type="GO" id="GO:0045259">
    <property type="term" value="C:proton-transporting ATP synthase complex"/>
    <property type="evidence" value="ECO:0007669"/>
    <property type="project" value="UniProtKB-KW"/>
</dbReference>
<dbReference type="GO" id="GO:0005524">
    <property type="term" value="F:ATP binding"/>
    <property type="evidence" value="ECO:0007669"/>
    <property type="project" value="UniProtKB-UniRule"/>
</dbReference>
<dbReference type="GO" id="GO:0046933">
    <property type="term" value="F:proton-transporting ATP synthase activity, rotational mechanism"/>
    <property type="evidence" value="ECO:0007669"/>
    <property type="project" value="UniProtKB-UniRule"/>
</dbReference>
<dbReference type="GO" id="GO:0015986">
    <property type="term" value="P:proton motive force-driven ATP synthesis"/>
    <property type="evidence" value="ECO:0000318"/>
    <property type="project" value="GO_Central"/>
</dbReference>
<dbReference type="CDD" id="cd12152">
    <property type="entry name" value="F1-ATPase_delta"/>
    <property type="match status" value="1"/>
</dbReference>
<dbReference type="Gene3D" id="6.10.140.480">
    <property type="match status" value="1"/>
</dbReference>
<dbReference type="Gene3D" id="2.60.15.10">
    <property type="entry name" value="F0F1 ATP synthase delta/epsilon subunit, N-terminal"/>
    <property type="match status" value="1"/>
</dbReference>
<dbReference type="HAMAP" id="MF_00530">
    <property type="entry name" value="ATP_synth_epsil_bac"/>
    <property type="match status" value="1"/>
</dbReference>
<dbReference type="InterPro" id="IPR001469">
    <property type="entry name" value="ATP_synth_F1_dsu/esu"/>
</dbReference>
<dbReference type="InterPro" id="IPR020546">
    <property type="entry name" value="ATP_synth_F1_dsu/esu_N"/>
</dbReference>
<dbReference type="InterPro" id="IPR020547">
    <property type="entry name" value="ATP_synth_F1_esu_C"/>
</dbReference>
<dbReference type="InterPro" id="IPR036771">
    <property type="entry name" value="ATPsynth_dsu/esu_N"/>
</dbReference>
<dbReference type="NCBIfam" id="TIGR01216">
    <property type="entry name" value="ATP_synt_epsi"/>
    <property type="match status" value="1"/>
</dbReference>
<dbReference type="PANTHER" id="PTHR13822">
    <property type="entry name" value="ATP SYNTHASE DELTA/EPSILON CHAIN"/>
    <property type="match status" value="1"/>
</dbReference>
<dbReference type="PANTHER" id="PTHR13822:SF10">
    <property type="entry name" value="ATP SYNTHASE EPSILON CHAIN, CHLOROPLASTIC"/>
    <property type="match status" value="1"/>
</dbReference>
<dbReference type="Pfam" id="PF00401">
    <property type="entry name" value="ATP-synt_DE"/>
    <property type="match status" value="1"/>
</dbReference>
<dbReference type="Pfam" id="PF02823">
    <property type="entry name" value="ATP-synt_DE_N"/>
    <property type="match status" value="1"/>
</dbReference>
<dbReference type="SUPFAM" id="SSF51344">
    <property type="entry name" value="Epsilon subunit of F1F0-ATP synthase N-terminal domain"/>
    <property type="match status" value="1"/>
</dbReference>
<feature type="initiator methionine" description="Removed" evidence="2">
    <location>
        <position position="1"/>
    </location>
</feature>
<feature type="chain" id="PRO_0000188258" description="ATP synthase epsilon chain, chloroplastic">
    <location>
        <begin position="2"/>
        <end position="141"/>
    </location>
</feature>
<feature type="sequence variant" description="In strain: CC-2290 / S1 D2 and CC-503.">
    <original>N</original>
    <variation>D</variation>
    <location>
        <position position="45"/>
    </location>
</feature>
<feature type="sequence conflict" description="In Ref. 1; AAA84147." evidence="5" ref="1">
    <original>E</original>
    <variation>V</variation>
    <location>
        <position position="120"/>
    </location>
</feature>
<geneLocation type="chloroplast"/>
<name>ATPE_CHLRE</name>
<sequence length="141" mass="15374">MSLQISILTPERPFWNGQADEIILPTETGEMGVLKNHAPIITGLNVGAMLIRGGQASGSKDEWNSYAIMGGFALVKQNQVTILANEAVSAENINPEEAKDAFETAKANLEKAEGVKEKVEANFAYKRAKARYQVVKVLKKI</sequence>
<accession>P07891</accession>
<accession>B7U1G5</accession>
<accession>Q9T2G5</accession>